<comment type="function">
    <text evidence="1">Catalyzes the synthesis of GMP from XMP.</text>
</comment>
<comment type="catalytic activity">
    <reaction evidence="1">
        <text>XMP + L-glutamine + ATP + H2O = GMP + L-glutamate + AMP + diphosphate + 2 H(+)</text>
        <dbReference type="Rhea" id="RHEA:11680"/>
        <dbReference type="ChEBI" id="CHEBI:15377"/>
        <dbReference type="ChEBI" id="CHEBI:15378"/>
        <dbReference type="ChEBI" id="CHEBI:29985"/>
        <dbReference type="ChEBI" id="CHEBI:30616"/>
        <dbReference type="ChEBI" id="CHEBI:33019"/>
        <dbReference type="ChEBI" id="CHEBI:57464"/>
        <dbReference type="ChEBI" id="CHEBI:58115"/>
        <dbReference type="ChEBI" id="CHEBI:58359"/>
        <dbReference type="ChEBI" id="CHEBI:456215"/>
        <dbReference type="EC" id="6.3.5.2"/>
    </reaction>
</comment>
<comment type="pathway">
    <text evidence="1">Purine metabolism; GMP biosynthesis; GMP from XMP (L-Gln route): step 1/1.</text>
</comment>
<comment type="subunit">
    <text evidence="1">Homodimer.</text>
</comment>
<evidence type="ECO:0000255" key="1">
    <source>
        <dbReference type="HAMAP-Rule" id="MF_00344"/>
    </source>
</evidence>
<feature type="chain" id="PRO_0000229469" description="GMP synthase [glutamine-hydrolyzing]">
    <location>
        <begin position="1"/>
        <end position="525"/>
    </location>
</feature>
<feature type="domain" description="Glutamine amidotransferase type-1" evidence="1">
    <location>
        <begin position="9"/>
        <end position="207"/>
    </location>
</feature>
<feature type="domain" description="GMPS ATP-PPase" evidence="1">
    <location>
        <begin position="208"/>
        <end position="400"/>
    </location>
</feature>
<feature type="active site" description="Nucleophile" evidence="1">
    <location>
        <position position="86"/>
    </location>
</feature>
<feature type="active site" evidence="1">
    <location>
        <position position="181"/>
    </location>
</feature>
<feature type="active site" evidence="1">
    <location>
        <position position="183"/>
    </location>
</feature>
<feature type="binding site" evidence="1">
    <location>
        <begin position="235"/>
        <end position="241"/>
    </location>
    <ligand>
        <name>ATP</name>
        <dbReference type="ChEBI" id="CHEBI:30616"/>
    </ligand>
</feature>
<name>GUAA_SHISS</name>
<accession>Q3YZ45</accession>
<sequence length="525" mass="58684">MTENIHKHRILILDFGSQYTQLVARRVRELGVYCELWAWDVTEAQIRDFNPSGIILSGGPESTTEENSPRAPQYVFEAGVPVFGVCYGMQTMAMQLGGHVEASNEREFGYAQVEVVNDSALVRGIEDALTADGKPLLDVWMSHGDKVTAIPSDFVTVASTESCPFAIMANEEKRFYGVQFHPEVTHTRQGMRMLERFVRDICQCEALWTPAKIIDDAVARIREQVGDDKVILGLSGGVDSSVTAMLLHRAIGKNLTCVFVDNGLLRLNEAEQVLDMFGDHFGLNIVHVPAEDRFLSALAGENDPEAKRKIIGRVFVEVFDEEALKLEDVKWLAQGTIYPDVIESAASATGKAHVIKSHHNVGGLPKEMKMGLVEPLKELFKDEVRKIGLELGLPYDMLYRHPFPGPGLGVRVLGEVKKEYCDLLRRADAIFIEELRKADLYDKVSQAFTVFLPVRSVGVMGDGRKYDWVVSLRAVETIDFMTAHWARLPYDFLGRVSNRIINEVNGISRVVYDISGKPPATIEWE</sequence>
<dbReference type="EC" id="6.3.5.2" evidence="1"/>
<dbReference type="EMBL" id="CP000038">
    <property type="protein sequence ID" value="AAZ89217.1"/>
    <property type="molecule type" value="Genomic_DNA"/>
</dbReference>
<dbReference type="RefSeq" id="WP_000138283.1">
    <property type="nucleotide sequence ID" value="NC_007384.1"/>
</dbReference>
<dbReference type="SMR" id="Q3YZ45"/>
<dbReference type="MEROPS" id="C26.957"/>
<dbReference type="GeneID" id="93774629"/>
<dbReference type="KEGG" id="ssn:SSON_2589"/>
<dbReference type="HOGENOM" id="CLU_014340_0_5_6"/>
<dbReference type="UniPathway" id="UPA00189">
    <property type="reaction ID" value="UER00296"/>
</dbReference>
<dbReference type="Proteomes" id="UP000002529">
    <property type="component" value="Chromosome"/>
</dbReference>
<dbReference type="GO" id="GO:0005829">
    <property type="term" value="C:cytosol"/>
    <property type="evidence" value="ECO:0007669"/>
    <property type="project" value="TreeGrafter"/>
</dbReference>
<dbReference type="GO" id="GO:0005524">
    <property type="term" value="F:ATP binding"/>
    <property type="evidence" value="ECO:0007669"/>
    <property type="project" value="UniProtKB-UniRule"/>
</dbReference>
<dbReference type="GO" id="GO:0003921">
    <property type="term" value="F:GMP synthase activity"/>
    <property type="evidence" value="ECO:0007669"/>
    <property type="project" value="InterPro"/>
</dbReference>
<dbReference type="CDD" id="cd01742">
    <property type="entry name" value="GATase1_GMP_Synthase"/>
    <property type="match status" value="1"/>
</dbReference>
<dbReference type="CDD" id="cd01997">
    <property type="entry name" value="GMP_synthase_C"/>
    <property type="match status" value="1"/>
</dbReference>
<dbReference type="FunFam" id="3.30.300.10:FF:000002">
    <property type="entry name" value="GMP synthase [glutamine-hydrolyzing]"/>
    <property type="match status" value="1"/>
</dbReference>
<dbReference type="FunFam" id="3.40.50.620:FF:000001">
    <property type="entry name" value="GMP synthase [glutamine-hydrolyzing]"/>
    <property type="match status" value="1"/>
</dbReference>
<dbReference type="FunFam" id="3.40.50.880:FF:000001">
    <property type="entry name" value="GMP synthase [glutamine-hydrolyzing]"/>
    <property type="match status" value="1"/>
</dbReference>
<dbReference type="Gene3D" id="3.30.300.10">
    <property type="match status" value="1"/>
</dbReference>
<dbReference type="Gene3D" id="3.40.50.880">
    <property type="match status" value="1"/>
</dbReference>
<dbReference type="Gene3D" id="3.40.50.620">
    <property type="entry name" value="HUPs"/>
    <property type="match status" value="1"/>
</dbReference>
<dbReference type="HAMAP" id="MF_00344">
    <property type="entry name" value="GMP_synthase"/>
    <property type="match status" value="1"/>
</dbReference>
<dbReference type="InterPro" id="IPR029062">
    <property type="entry name" value="Class_I_gatase-like"/>
</dbReference>
<dbReference type="InterPro" id="IPR017926">
    <property type="entry name" value="GATASE"/>
</dbReference>
<dbReference type="InterPro" id="IPR001674">
    <property type="entry name" value="GMP_synth_C"/>
</dbReference>
<dbReference type="InterPro" id="IPR004739">
    <property type="entry name" value="GMP_synth_GATase"/>
</dbReference>
<dbReference type="InterPro" id="IPR022955">
    <property type="entry name" value="GMP_synthase"/>
</dbReference>
<dbReference type="InterPro" id="IPR025777">
    <property type="entry name" value="GMPS_ATP_PPase_dom"/>
</dbReference>
<dbReference type="InterPro" id="IPR022310">
    <property type="entry name" value="NAD/GMP_synthase"/>
</dbReference>
<dbReference type="InterPro" id="IPR014729">
    <property type="entry name" value="Rossmann-like_a/b/a_fold"/>
</dbReference>
<dbReference type="NCBIfam" id="TIGR00884">
    <property type="entry name" value="guaA_Cterm"/>
    <property type="match status" value="1"/>
</dbReference>
<dbReference type="NCBIfam" id="TIGR00888">
    <property type="entry name" value="guaA_Nterm"/>
    <property type="match status" value="1"/>
</dbReference>
<dbReference type="NCBIfam" id="NF000848">
    <property type="entry name" value="PRK00074.1"/>
    <property type="match status" value="1"/>
</dbReference>
<dbReference type="PANTHER" id="PTHR11922:SF2">
    <property type="entry name" value="GMP SYNTHASE [GLUTAMINE-HYDROLYZING]"/>
    <property type="match status" value="1"/>
</dbReference>
<dbReference type="PANTHER" id="PTHR11922">
    <property type="entry name" value="GMP SYNTHASE-RELATED"/>
    <property type="match status" value="1"/>
</dbReference>
<dbReference type="Pfam" id="PF00117">
    <property type="entry name" value="GATase"/>
    <property type="match status" value="1"/>
</dbReference>
<dbReference type="Pfam" id="PF00958">
    <property type="entry name" value="GMP_synt_C"/>
    <property type="match status" value="1"/>
</dbReference>
<dbReference type="Pfam" id="PF02540">
    <property type="entry name" value="NAD_synthase"/>
    <property type="match status" value="1"/>
</dbReference>
<dbReference type="PRINTS" id="PR00097">
    <property type="entry name" value="ANTSNTHASEII"/>
</dbReference>
<dbReference type="PRINTS" id="PR00099">
    <property type="entry name" value="CPSGATASE"/>
</dbReference>
<dbReference type="PRINTS" id="PR00096">
    <property type="entry name" value="GATASE"/>
</dbReference>
<dbReference type="SUPFAM" id="SSF52402">
    <property type="entry name" value="Adenine nucleotide alpha hydrolases-like"/>
    <property type="match status" value="1"/>
</dbReference>
<dbReference type="SUPFAM" id="SSF52317">
    <property type="entry name" value="Class I glutamine amidotransferase-like"/>
    <property type="match status" value="1"/>
</dbReference>
<dbReference type="SUPFAM" id="SSF54810">
    <property type="entry name" value="GMP synthetase C-terminal dimerisation domain"/>
    <property type="match status" value="1"/>
</dbReference>
<dbReference type="PROSITE" id="PS51273">
    <property type="entry name" value="GATASE_TYPE_1"/>
    <property type="match status" value="1"/>
</dbReference>
<dbReference type="PROSITE" id="PS51553">
    <property type="entry name" value="GMPS_ATP_PPASE"/>
    <property type="match status" value="1"/>
</dbReference>
<gene>
    <name evidence="1" type="primary">guaA</name>
    <name type="ordered locus">SSON_2589</name>
</gene>
<keyword id="KW-0067">ATP-binding</keyword>
<keyword id="KW-0315">Glutamine amidotransferase</keyword>
<keyword id="KW-0332">GMP biosynthesis</keyword>
<keyword id="KW-0436">Ligase</keyword>
<keyword id="KW-0547">Nucleotide-binding</keyword>
<keyword id="KW-0658">Purine biosynthesis</keyword>
<keyword id="KW-1185">Reference proteome</keyword>
<proteinExistence type="inferred from homology"/>
<organism>
    <name type="scientific">Shigella sonnei (strain Ss046)</name>
    <dbReference type="NCBI Taxonomy" id="300269"/>
    <lineage>
        <taxon>Bacteria</taxon>
        <taxon>Pseudomonadati</taxon>
        <taxon>Pseudomonadota</taxon>
        <taxon>Gammaproteobacteria</taxon>
        <taxon>Enterobacterales</taxon>
        <taxon>Enterobacteriaceae</taxon>
        <taxon>Shigella</taxon>
    </lineage>
</organism>
<reference key="1">
    <citation type="journal article" date="2005" name="Nucleic Acids Res.">
        <title>Genome dynamics and diversity of Shigella species, the etiologic agents of bacillary dysentery.</title>
        <authorList>
            <person name="Yang F."/>
            <person name="Yang J."/>
            <person name="Zhang X."/>
            <person name="Chen L."/>
            <person name="Jiang Y."/>
            <person name="Yan Y."/>
            <person name="Tang X."/>
            <person name="Wang J."/>
            <person name="Xiong Z."/>
            <person name="Dong J."/>
            <person name="Xue Y."/>
            <person name="Zhu Y."/>
            <person name="Xu X."/>
            <person name="Sun L."/>
            <person name="Chen S."/>
            <person name="Nie H."/>
            <person name="Peng J."/>
            <person name="Xu J."/>
            <person name="Wang Y."/>
            <person name="Yuan Z."/>
            <person name="Wen Y."/>
            <person name="Yao Z."/>
            <person name="Shen Y."/>
            <person name="Qiang B."/>
            <person name="Hou Y."/>
            <person name="Yu J."/>
            <person name="Jin Q."/>
        </authorList>
    </citation>
    <scope>NUCLEOTIDE SEQUENCE [LARGE SCALE GENOMIC DNA]</scope>
    <source>
        <strain>Ss046</strain>
    </source>
</reference>
<protein>
    <recommendedName>
        <fullName evidence="1">GMP synthase [glutamine-hydrolyzing]</fullName>
        <ecNumber evidence="1">6.3.5.2</ecNumber>
    </recommendedName>
    <alternativeName>
        <fullName evidence="1">GMP synthetase</fullName>
    </alternativeName>
    <alternativeName>
        <fullName evidence="1">Glutamine amidotransferase</fullName>
    </alternativeName>
</protein>